<evidence type="ECO:0000255" key="1"/>
<evidence type="ECO:0000256" key="2">
    <source>
        <dbReference type="SAM" id="MobiDB-lite"/>
    </source>
</evidence>
<evidence type="ECO:0000305" key="3"/>
<name>LRTM2_HUMAN</name>
<keyword id="KW-0325">Glycoprotein</keyword>
<keyword id="KW-0433">Leucine-rich repeat</keyword>
<keyword id="KW-0472">Membrane</keyword>
<keyword id="KW-1267">Proteomics identification</keyword>
<keyword id="KW-1185">Reference proteome</keyword>
<keyword id="KW-0677">Repeat</keyword>
<keyword id="KW-0732">Signal</keyword>
<keyword id="KW-0812">Transmembrane</keyword>
<keyword id="KW-1133">Transmembrane helix</keyword>
<organism>
    <name type="scientific">Homo sapiens</name>
    <name type="common">Human</name>
    <dbReference type="NCBI Taxonomy" id="9606"/>
    <lineage>
        <taxon>Eukaryota</taxon>
        <taxon>Metazoa</taxon>
        <taxon>Chordata</taxon>
        <taxon>Craniata</taxon>
        <taxon>Vertebrata</taxon>
        <taxon>Euteleostomi</taxon>
        <taxon>Mammalia</taxon>
        <taxon>Eutheria</taxon>
        <taxon>Euarchontoglires</taxon>
        <taxon>Primates</taxon>
        <taxon>Haplorrhini</taxon>
        <taxon>Catarrhini</taxon>
        <taxon>Hominidae</taxon>
        <taxon>Homo</taxon>
    </lineage>
</organism>
<comment type="subcellular location">
    <subcellularLocation>
        <location evidence="3">Membrane</location>
        <topology evidence="3">Single-pass type I membrane protein</topology>
    </subcellularLocation>
</comment>
<sequence length="370" mass="41158">MLAPGSSPGQRGRLALQWRQVSWITCWIALYAVEALPTCPFSCKCDSRSLEVDCSGLGLTTVPPDVPAATRTLLLLNNKLSALPSWAFANLSSLQRLDLSNNFLDRLPRSIFGDLTNLTELQLRNNSIRTLDRDLLRHSPLLRHLDLSINGLAQLPPGLFDGLLALRSLSLRSNRLQNLDRLTFEPLANLQLLQVGDNPWECDCNLREFKHWMEWFSYRGGRLDQLACTLPKELRGKDMRMVPMEMFNYCSQLEDENSSAGLDIPGPPCTKASPEPAKPKPGAEPEPEPSTACPQKQRHRPASVRRAMGTVIIAGVVCGVVCIMMVVAAAYGCIYASLMAKYHRELKKRQPLMGDPEGEHEDQKQISSVA</sequence>
<protein>
    <recommendedName>
        <fullName>Leucine-rich repeat and transmembrane domain-containing protein 2</fullName>
    </recommendedName>
</protein>
<feature type="signal peptide" evidence="1">
    <location>
        <begin position="1"/>
        <end position="35"/>
    </location>
</feature>
<feature type="chain" id="PRO_0000263686" description="Leucine-rich repeat and transmembrane domain-containing protein 2">
    <location>
        <begin position="36"/>
        <end position="370"/>
    </location>
</feature>
<feature type="topological domain" description="Extracellular" evidence="1">
    <location>
        <begin position="36"/>
        <end position="310"/>
    </location>
</feature>
<feature type="transmembrane region" description="Helical" evidence="1">
    <location>
        <begin position="311"/>
        <end position="331"/>
    </location>
</feature>
<feature type="topological domain" description="Cytoplasmic" evidence="1">
    <location>
        <begin position="332"/>
        <end position="370"/>
    </location>
</feature>
<feature type="domain" description="LRRNT">
    <location>
        <begin position="36"/>
        <end position="68"/>
    </location>
</feature>
<feature type="repeat" description="LRR 1">
    <location>
        <begin position="69"/>
        <end position="90"/>
    </location>
</feature>
<feature type="repeat" description="LRR 2">
    <location>
        <begin position="93"/>
        <end position="114"/>
    </location>
</feature>
<feature type="repeat" description="LRR 3">
    <location>
        <begin position="117"/>
        <end position="139"/>
    </location>
</feature>
<feature type="repeat" description="LRR 4">
    <location>
        <begin position="141"/>
        <end position="162"/>
    </location>
</feature>
<feature type="repeat" description="LRR 5">
    <location>
        <begin position="165"/>
        <end position="186"/>
    </location>
</feature>
<feature type="domain" description="LRRCT">
    <location>
        <begin position="198"/>
        <end position="252"/>
    </location>
</feature>
<feature type="region of interest" description="Disordered" evidence="2">
    <location>
        <begin position="261"/>
        <end position="300"/>
    </location>
</feature>
<feature type="region of interest" description="Disordered" evidence="2">
    <location>
        <begin position="351"/>
        <end position="370"/>
    </location>
</feature>
<feature type="glycosylation site" description="N-linked (GlcNAc...) asparagine" evidence="1">
    <location>
        <position position="90"/>
    </location>
</feature>
<feature type="glycosylation site" description="N-linked (GlcNAc...) asparagine" evidence="1">
    <location>
        <position position="117"/>
    </location>
</feature>
<feature type="glycosylation site" description="N-linked (GlcNAc...) asparagine" evidence="1">
    <location>
        <position position="125"/>
    </location>
</feature>
<feature type="glycosylation site" description="N-linked (GlcNAc...) asparagine" evidence="1">
    <location>
        <position position="257"/>
    </location>
</feature>
<feature type="sequence variant" id="VAR_061679" description="In dbSNP:rs41276696.">
    <original>D</original>
    <variation>N</variation>
    <location>
        <position position="161"/>
    </location>
</feature>
<accession>Q8N967</accession>
<accession>A7E2U6</accession>
<gene>
    <name type="primary">LRTM2</name>
</gene>
<proteinExistence type="evidence at protein level"/>
<reference key="1">
    <citation type="journal article" date="2004" name="Nat. Genet.">
        <title>Complete sequencing and characterization of 21,243 full-length human cDNAs.</title>
        <authorList>
            <person name="Ota T."/>
            <person name="Suzuki Y."/>
            <person name="Nishikawa T."/>
            <person name="Otsuki T."/>
            <person name="Sugiyama T."/>
            <person name="Irie R."/>
            <person name="Wakamatsu A."/>
            <person name="Hayashi K."/>
            <person name="Sato H."/>
            <person name="Nagai K."/>
            <person name="Kimura K."/>
            <person name="Makita H."/>
            <person name="Sekine M."/>
            <person name="Obayashi M."/>
            <person name="Nishi T."/>
            <person name="Shibahara T."/>
            <person name="Tanaka T."/>
            <person name="Ishii S."/>
            <person name="Yamamoto J."/>
            <person name="Saito K."/>
            <person name="Kawai Y."/>
            <person name="Isono Y."/>
            <person name="Nakamura Y."/>
            <person name="Nagahari K."/>
            <person name="Murakami K."/>
            <person name="Yasuda T."/>
            <person name="Iwayanagi T."/>
            <person name="Wagatsuma M."/>
            <person name="Shiratori A."/>
            <person name="Sudo H."/>
            <person name="Hosoiri T."/>
            <person name="Kaku Y."/>
            <person name="Kodaira H."/>
            <person name="Kondo H."/>
            <person name="Sugawara M."/>
            <person name="Takahashi M."/>
            <person name="Kanda K."/>
            <person name="Yokoi T."/>
            <person name="Furuya T."/>
            <person name="Kikkawa E."/>
            <person name="Omura Y."/>
            <person name="Abe K."/>
            <person name="Kamihara K."/>
            <person name="Katsuta N."/>
            <person name="Sato K."/>
            <person name="Tanikawa M."/>
            <person name="Yamazaki M."/>
            <person name="Ninomiya K."/>
            <person name="Ishibashi T."/>
            <person name="Yamashita H."/>
            <person name="Murakawa K."/>
            <person name="Fujimori K."/>
            <person name="Tanai H."/>
            <person name="Kimata M."/>
            <person name="Watanabe M."/>
            <person name="Hiraoka S."/>
            <person name="Chiba Y."/>
            <person name="Ishida S."/>
            <person name="Ono Y."/>
            <person name="Takiguchi S."/>
            <person name="Watanabe S."/>
            <person name="Yosida M."/>
            <person name="Hotuta T."/>
            <person name="Kusano J."/>
            <person name="Kanehori K."/>
            <person name="Takahashi-Fujii A."/>
            <person name="Hara H."/>
            <person name="Tanase T.-O."/>
            <person name="Nomura Y."/>
            <person name="Togiya S."/>
            <person name="Komai F."/>
            <person name="Hara R."/>
            <person name="Takeuchi K."/>
            <person name="Arita M."/>
            <person name="Imose N."/>
            <person name="Musashino K."/>
            <person name="Yuuki H."/>
            <person name="Oshima A."/>
            <person name="Sasaki N."/>
            <person name="Aotsuka S."/>
            <person name="Yoshikawa Y."/>
            <person name="Matsunawa H."/>
            <person name="Ichihara T."/>
            <person name="Shiohata N."/>
            <person name="Sano S."/>
            <person name="Moriya S."/>
            <person name="Momiyama H."/>
            <person name="Satoh N."/>
            <person name="Takami S."/>
            <person name="Terashima Y."/>
            <person name="Suzuki O."/>
            <person name="Nakagawa S."/>
            <person name="Senoh A."/>
            <person name="Mizoguchi H."/>
            <person name="Goto Y."/>
            <person name="Shimizu F."/>
            <person name="Wakebe H."/>
            <person name="Hishigaki H."/>
            <person name="Watanabe T."/>
            <person name="Sugiyama A."/>
            <person name="Takemoto M."/>
            <person name="Kawakami B."/>
            <person name="Yamazaki M."/>
            <person name="Watanabe K."/>
            <person name="Kumagai A."/>
            <person name="Itakura S."/>
            <person name="Fukuzumi Y."/>
            <person name="Fujimori Y."/>
            <person name="Komiyama M."/>
            <person name="Tashiro H."/>
            <person name="Tanigami A."/>
            <person name="Fujiwara T."/>
            <person name="Ono T."/>
            <person name="Yamada K."/>
            <person name="Fujii Y."/>
            <person name="Ozaki K."/>
            <person name="Hirao M."/>
            <person name="Ohmori Y."/>
            <person name="Kawabata A."/>
            <person name="Hikiji T."/>
            <person name="Kobatake N."/>
            <person name="Inagaki H."/>
            <person name="Ikema Y."/>
            <person name="Okamoto S."/>
            <person name="Okitani R."/>
            <person name="Kawakami T."/>
            <person name="Noguchi S."/>
            <person name="Itoh T."/>
            <person name="Shigeta K."/>
            <person name="Senba T."/>
            <person name="Matsumura K."/>
            <person name="Nakajima Y."/>
            <person name="Mizuno T."/>
            <person name="Morinaga M."/>
            <person name="Sasaki M."/>
            <person name="Togashi T."/>
            <person name="Oyama M."/>
            <person name="Hata H."/>
            <person name="Watanabe M."/>
            <person name="Komatsu T."/>
            <person name="Mizushima-Sugano J."/>
            <person name="Satoh T."/>
            <person name="Shirai Y."/>
            <person name="Takahashi Y."/>
            <person name="Nakagawa K."/>
            <person name="Okumura K."/>
            <person name="Nagase T."/>
            <person name="Nomura N."/>
            <person name="Kikuchi H."/>
            <person name="Masuho Y."/>
            <person name="Yamashita R."/>
            <person name="Nakai K."/>
            <person name="Yada T."/>
            <person name="Nakamura Y."/>
            <person name="Ohara O."/>
            <person name="Isogai T."/>
            <person name="Sugano S."/>
        </authorList>
    </citation>
    <scope>NUCLEOTIDE SEQUENCE [LARGE SCALE MRNA]</scope>
    <source>
        <tissue>Amygdala</tissue>
        <tissue>Brain</tissue>
    </source>
</reference>
<reference key="2">
    <citation type="submission" date="2005-09" db="EMBL/GenBank/DDBJ databases">
        <authorList>
            <person name="Mural R.J."/>
            <person name="Istrail S."/>
            <person name="Sutton G."/>
            <person name="Florea L."/>
            <person name="Halpern A.L."/>
            <person name="Mobarry C.M."/>
            <person name="Lippert R."/>
            <person name="Walenz B."/>
            <person name="Shatkay H."/>
            <person name="Dew I."/>
            <person name="Miller J.R."/>
            <person name="Flanigan M.J."/>
            <person name="Edwards N.J."/>
            <person name="Bolanos R."/>
            <person name="Fasulo D."/>
            <person name="Halldorsson B.V."/>
            <person name="Hannenhalli S."/>
            <person name="Turner R."/>
            <person name="Yooseph S."/>
            <person name="Lu F."/>
            <person name="Nusskern D.R."/>
            <person name="Shue B.C."/>
            <person name="Zheng X.H."/>
            <person name="Zhong F."/>
            <person name="Delcher A.L."/>
            <person name="Huson D.H."/>
            <person name="Kravitz S.A."/>
            <person name="Mouchard L."/>
            <person name="Reinert K."/>
            <person name="Remington K.A."/>
            <person name="Clark A.G."/>
            <person name="Waterman M.S."/>
            <person name="Eichler E.E."/>
            <person name="Adams M.D."/>
            <person name="Hunkapiller M.W."/>
            <person name="Myers E.W."/>
            <person name="Venter J.C."/>
        </authorList>
    </citation>
    <scope>NUCLEOTIDE SEQUENCE [LARGE SCALE GENOMIC DNA]</scope>
</reference>
<reference key="3">
    <citation type="journal article" date="2004" name="Genome Res.">
        <title>The status, quality, and expansion of the NIH full-length cDNA project: the Mammalian Gene Collection (MGC).</title>
        <authorList>
            <consortium name="The MGC Project Team"/>
        </authorList>
    </citation>
    <scope>NUCLEOTIDE SEQUENCE [LARGE SCALE MRNA]</scope>
    <source>
        <tissue>Testis</tissue>
    </source>
</reference>
<dbReference type="EMBL" id="AK095610">
    <property type="protein sequence ID" value="BAC04589.1"/>
    <property type="molecule type" value="mRNA"/>
</dbReference>
<dbReference type="EMBL" id="AK124687">
    <property type="protein sequence ID" value="BAG54068.1"/>
    <property type="molecule type" value="mRNA"/>
</dbReference>
<dbReference type="EMBL" id="CH471116">
    <property type="protein sequence ID" value="EAW88921.1"/>
    <property type="molecule type" value="Genomic_DNA"/>
</dbReference>
<dbReference type="EMBL" id="CH471116">
    <property type="protein sequence ID" value="EAW88922.1"/>
    <property type="molecule type" value="Genomic_DNA"/>
</dbReference>
<dbReference type="EMBL" id="BC146894">
    <property type="protein sequence ID" value="AAI46895.1"/>
    <property type="molecule type" value="mRNA"/>
</dbReference>
<dbReference type="EMBL" id="BC146910">
    <property type="protein sequence ID" value="AAI46911.1"/>
    <property type="molecule type" value="mRNA"/>
</dbReference>
<dbReference type="EMBL" id="BC150568">
    <property type="protein sequence ID" value="AAI50569.1"/>
    <property type="molecule type" value="mRNA"/>
</dbReference>
<dbReference type="CCDS" id="CCDS31726.1"/>
<dbReference type="RefSeq" id="NP_001034118.1">
    <property type="nucleotide sequence ID" value="NM_001039029.3"/>
</dbReference>
<dbReference type="RefSeq" id="NP_001157397.1">
    <property type="nucleotide sequence ID" value="NM_001163925.2"/>
</dbReference>
<dbReference type="RefSeq" id="NP_001157398.1">
    <property type="nucleotide sequence ID" value="NM_001163926.2"/>
</dbReference>
<dbReference type="RefSeq" id="XP_011519317.1">
    <property type="nucleotide sequence ID" value="XM_011521015.2"/>
</dbReference>
<dbReference type="RefSeq" id="XP_054188260.1">
    <property type="nucleotide sequence ID" value="XM_054332285.1"/>
</dbReference>
<dbReference type="RefSeq" id="XP_054228984.1">
    <property type="nucleotide sequence ID" value="XM_054373009.1"/>
</dbReference>
<dbReference type="SMR" id="Q8N967"/>
<dbReference type="BioGRID" id="576379">
    <property type="interactions" value="10"/>
</dbReference>
<dbReference type="FunCoup" id="Q8N967">
    <property type="interactions" value="26"/>
</dbReference>
<dbReference type="IntAct" id="Q8N967">
    <property type="interactions" value="8"/>
</dbReference>
<dbReference type="STRING" id="9606.ENSP00000446278"/>
<dbReference type="GlyCosmos" id="Q8N967">
    <property type="glycosylation" value="5 sites, 1 glycan"/>
</dbReference>
<dbReference type="GlyGen" id="Q8N967">
    <property type="glycosylation" value="5 sites, 1 N-linked glycan (1 site), 1 O-linked glycan (1 site)"/>
</dbReference>
<dbReference type="iPTMnet" id="Q8N967"/>
<dbReference type="PhosphoSitePlus" id="Q8N967"/>
<dbReference type="SwissPalm" id="Q8N967"/>
<dbReference type="BioMuta" id="LRTM2"/>
<dbReference type="DMDM" id="74760021"/>
<dbReference type="jPOST" id="Q8N967"/>
<dbReference type="MassIVE" id="Q8N967"/>
<dbReference type="PaxDb" id="9606-ENSP00000446278"/>
<dbReference type="PeptideAtlas" id="Q8N967"/>
<dbReference type="ProteomicsDB" id="72496"/>
<dbReference type="Antibodypedia" id="65578">
    <property type="antibodies" value="67 antibodies from 14 providers"/>
</dbReference>
<dbReference type="DNASU" id="654429"/>
<dbReference type="Ensembl" id="ENST00000299194.6">
    <property type="protein sequence ID" value="ENSP00000299194.1"/>
    <property type="gene ID" value="ENSG00000166159.11"/>
</dbReference>
<dbReference type="Ensembl" id="ENST00000535041.5">
    <property type="protein sequence ID" value="ENSP00000444737.1"/>
    <property type="gene ID" value="ENSG00000166159.11"/>
</dbReference>
<dbReference type="Ensembl" id="ENST00000543818.5">
    <property type="protein sequence ID" value="ENSP00000446278.1"/>
    <property type="gene ID" value="ENSG00000166159.11"/>
</dbReference>
<dbReference type="Ensembl" id="ENST00000643163.1">
    <property type="protein sequence ID" value="ENSP00000495412.1"/>
    <property type="gene ID" value="ENSG00000285383.2"/>
</dbReference>
<dbReference type="Ensembl" id="ENST00000643383.1">
    <property type="protein sequence ID" value="ENSP00000496490.1"/>
    <property type="gene ID" value="ENSG00000285383.2"/>
</dbReference>
<dbReference type="Ensembl" id="ENST00000646030.2">
    <property type="protein sequence ID" value="ENSP00000496621.1"/>
    <property type="gene ID" value="ENSG00000285383.2"/>
</dbReference>
<dbReference type="GeneID" id="654429"/>
<dbReference type="KEGG" id="hsa:654429"/>
<dbReference type="MANE-Select" id="ENST00000299194.6">
    <property type="protein sequence ID" value="ENSP00000299194.1"/>
    <property type="RefSeq nucleotide sequence ID" value="NM_001039029.3"/>
    <property type="RefSeq protein sequence ID" value="NP_001034118.1"/>
</dbReference>
<dbReference type="UCSC" id="uc001qjt.3">
    <property type="organism name" value="human"/>
</dbReference>
<dbReference type="AGR" id="HGNC:32443"/>
<dbReference type="CTD" id="654429"/>
<dbReference type="GeneCards" id="LRTM2"/>
<dbReference type="HGNC" id="HGNC:32443">
    <property type="gene designation" value="LRTM2"/>
</dbReference>
<dbReference type="HPA" id="ENSG00000166159">
    <property type="expression patterns" value="Tissue enriched (brain)"/>
</dbReference>
<dbReference type="neXtProt" id="NX_Q8N967"/>
<dbReference type="OpenTargets" id="ENSG00000166159"/>
<dbReference type="PharmGKB" id="PA142671500"/>
<dbReference type="VEuPathDB" id="HostDB:ENSG00000166159"/>
<dbReference type="eggNOG" id="KOG0619">
    <property type="taxonomic scope" value="Eukaryota"/>
</dbReference>
<dbReference type="GeneTree" id="ENSGT00940000157572"/>
<dbReference type="HOGENOM" id="CLU_038584_1_0_1"/>
<dbReference type="InParanoid" id="Q8N967"/>
<dbReference type="OMA" id="QISWIAC"/>
<dbReference type="OrthoDB" id="1600340at2759"/>
<dbReference type="PAN-GO" id="Q8N967">
    <property type="GO annotations" value="4 GO annotations based on evolutionary models"/>
</dbReference>
<dbReference type="PhylomeDB" id="Q8N967"/>
<dbReference type="TreeFam" id="TF351114"/>
<dbReference type="PathwayCommons" id="Q8N967"/>
<dbReference type="BioGRID-ORCS" id="654429">
    <property type="hits" value="17 hits in 1146 CRISPR screens"/>
</dbReference>
<dbReference type="GenomeRNAi" id="654429"/>
<dbReference type="Pharos" id="Q8N967">
    <property type="development level" value="Tdark"/>
</dbReference>
<dbReference type="PRO" id="PR:Q8N967"/>
<dbReference type="Proteomes" id="UP000005640">
    <property type="component" value="Chromosome 12"/>
</dbReference>
<dbReference type="RNAct" id="Q8N967">
    <property type="molecule type" value="protein"/>
</dbReference>
<dbReference type="Bgee" id="ENSG00000166159">
    <property type="expression patterns" value="Expressed in putamen and 31 other cell types or tissues"/>
</dbReference>
<dbReference type="ExpressionAtlas" id="Q8N967">
    <property type="expression patterns" value="baseline and differential"/>
</dbReference>
<dbReference type="GO" id="GO:0016020">
    <property type="term" value="C:membrane"/>
    <property type="evidence" value="ECO:0007669"/>
    <property type="project" value="UniProtKB-SubCell"/>
</dbReference>
<dbReference type="GO" id="GO:0051965">
    <property type="term" value="P:positive regulation of synapse assembly"/>
    <property type="evidence" value="ECO:0007669"/>
    <property type="project" value="Ensembl"/>
</dbReference>
<dbReference type="FunFam" id="3.80.10.10:FF:000576">
    <property type="entry name" value="Leucine rich repeats and transmembrane domains 2"/>
    <property type="match status" value="1"/>
</dbReference>
<dbReference type="Gene3D" id="3.80.10.10">
    <property type="entry name" value="Ribonuclease Inhibitor"/>
    <property type="match status" value="1"/>
</dbReference>
<dbReference type="InterPro" id="IPR000483">
    <property type="entry name" value="Cys-rich_flank_reg_C"/>
</dbReference>
<dbReference type="InterPro" id="IPR001611">
    <property type="entry name" value="Leu-rich_rpt"/>
</dbReference>
<dbReference type="InterPro" id="IPR003591">
    <property type="entry name" value="Leu-rich_rpt_typical-subtyp"/>
</dbReference>
<dbReference type="InterPro" id="IPR032675">
    <property type="entry name" value="LRR_dom_sf"/>
</dbReference>
<dbReference type="InterPro" id="IPR050541">
    <property type="entry name" value="LRR_TM_domain-containing"/>
</dbReference>
<dbReference type="InterPro" id="IPR000372">
    <property type="entry name" value="LRRNT"/>
</dbReference>
<dbReference type="PANTHER" id="PTHR24369">
    <property type="entry name" value="ANTIGEN BSP, PUTATIVE-RELATED"/>
    <property type="match status" value="1"/>
</dbReference>
<dbReference type="PANTHER" id="PTHR24369:SF175">
    <property type="entry name" value="LEUCINE RICH REPEATS AND TRANSMEMBRANE DOMAINS 2"/>
    <property type="match status" value="1"/>
</dbReference>
<dbReference type="Pfam" id="PF13855">
    <property type="entry name" value="LRR_8"/>
    <property type="match status" value="1"/>
</dbReference>
<dbReference type="Pfam" id="PF01462">
    <property type="entry name" value="LRRNT"/>
    <property type="match status" value="1"/>
</dbReference>
<dbReference type="SMART" id="SM00369">
    <property type="entry name" value="LRR_TYP"/>
    <property type="match status" value="5"/>
</dbReference>
<dbReference type="SMART" id="SM00082">
    <property type="entry name" value="LRRCT"/>
    <property type="match status" value="1"/>
</dbReference>
<dbReference type="SMART" id="SM00013">
    <property type="entry name" value="LRRNT"/>
    <property type="match status" value="1"/>
</dbReference>
<dbReference type="SUPFAM" id="SSF52058">
    <property type="entry name" value="L domain-like"/>
    <property type="match status" value="1"/>
</dbReference>
<dbReference type="PROSITE" id="PS51450">
    <property type="entry name" value="LRR"/>
    <property type="match status" value="5"/>
</dbReference>